<reference key="1">
    <citation type="submission" date="2008-08" db="EMBL/GenBank/DDBJ databases">
        <title>Complete sequence of Vibrio fischeri strain MJ11.</title>
        <authorList>
            <person name="Mandel M.J."/>
            <person name="Stabb E.V."/>
            <person name="Ruby E.G."/>
            <person name="Ferriera S."/>
            <person name="Johnson J."/>
            <person name="Kravitz S."/>
            <person name="Beeson K."/>
            <person name="Sutton G."/>
            <person name="Rogers Y.-H."/>
            <person name="Friedman R."/>
            <person name="Frazier M."/>
            <person name="Venter J.C."/>
        </authorList>
    </citation>
    <scope>NUCLEOTIDE SEQUENCE [LARGE SCALE GENOMIC DNA]</scope>
    <source>
        <strain>MJ11</strain>
    </source>
</reference>
<keyword id="KW-0119">Carbohydrate metabolism</keyword>
<keyword id="KW-0413">Isomerase</keyword>
<keyword id="KW-0521">NADP</keyword>
<protein>
    <recommendedName>
        <fullName evidence="1">ADP-L-glycero-D-manno-heptose-6-epimerase</fullName>
        <ecNumber evidence="1">5.1.3.20</ecNumber>
    </recommendedName>
    <alternativeName>
        <fullName evidence="1">ADP-L-glycero-beta-D-manno-heptose-6-epimerase</fullName>
        <shortName evidence="1">ADP-glyceromanno-heptose 6-epimerase</shortName>
        <shortName evidence="1">ADP-hep 6-epimerase</shortName>
        <shortName evidence="1">AGME</shortName>
    </alternativeName>
</protein>
<feature type="chain" id="PRO_1000190413" description="ADP-L-glycero-D-manno-heptose-6-epimerase">
    <location>
        <begin position="1"/>
        <end position="313"/>
    </location>
</feature>
<feature type="active site" description="Proton acceptor" evidence="1">
    <location>
        <position position="139"/>
    </location>
</feature>
<feature type="active site" description="Proton acceptor" evidence="1">
    <location>
        <position position="183"/>
    </location>
</feature>
<feature type="binding site" evidence="1">
    <location>
        <begin position="10"/>
        <end position="11"/>
    </location>
    <ligand>
        <name>NADP(+)</name>
        <dbReference type="ChEBI" id="CHEBI:58349"/>
    </ligand>
</feature>
<feature type="binding site" evidence="1">
    <location>
        <begin position="31"/>
        <end position="32"/>
    </location>
    <ligand>
        <name>NADP(+)</name>
        <dbReference type="ChEBI" id="CHEBI:58349"/>
    </ligand>
</feature>
<feature type="binding site" evidence="1">
    <location>
        <position position="38"/>
    </location>
    <ligand>
        <name>NADP(+)</name>
        <dbReference type="ChEBI" id="CHEBI:58349"/>
    </ligand>
</feature>
<feature type="binding site" evidence="1">
    <location>
        <position position="53"/>
    </location>
    <ligand>
        <name>NADP(+)</name>
        <dbReference type="ChEBI" id="CHEBI:58349"/>
    </ligand>
</feature>
<feature type="binding site" evidence="1">
    <location>
        <begin position="75"/>
        <end position="79"/>
    </location>
    <ligand>
        <name>NADP(+)</name>
        <dbReference type="ChEBI" id="CHEBI:58349"/>
    </ligand>
</feature>
<feature type="binding site" evidence="1">
    <location>
        <position position="92"/>
    </location>
    <ligand>
        <name>NADP(+)</name>
        <dbReference type="ChEBI" id="CHEBI:58349"/>
    </ligand>
</feature>
<feature type="binding site" evidence="1">
    <location>
        <position position="143"/>
    </location>
    <ligand>
        <name>NADP(+)</name>
        <dbReference type="ChEBI" id="CHEBI:58349"/>
    </ligand>
</feature>
<feature type="binding site" evidence="1">
    <location>
        <position position="174"/>
    </location>
    <ligand>
        <name>substrate</name>
    </ligand>
</feature>
<feature type="binding site" evidence="1">
    <location>
        <position position="175"/>
    </location>
    <ligand>
        <name>NADP(+)</name>
        <dbReference type="ChEBI" id="CHEBI:58349"/>
    </ligand>
</feature>
<feature type="binding site" evidence="1">
    <location>
        <position position="183"/>
    </location>
    <ligand>
        <name>NADP(+)</name>
        <dbReference type="ChEBI" id="CHEBI:58349"/>
    </ligand>
</feature>
<feature type="binding site" evidence="1">
    <location>
        <position position="185"/>
    </location>
    <ligand>
        <name>substrate</name>
    </ligand>
</feature>
<feature type="binding site" evidence="1">
    <location>
        <position position="192"/>
    </location>
    <ligand>
        <name>substrate</name>
    </ligand>
</feature>
<feature type="binding site" evidence="1">
    <location>
        <begin position="206"/>
        <end position="209"/>
    </location>
    <ligand>
        <name>substrate</name>
    </ligand>
</feature>
<feature type="binding site" evidence="1">
    <location>
        <position position="214"/>
    </location>
    <ligand>
        <name>substrate</name>
    </ligand>
</feature>
<feature type="binding site" evidence="1">
    <location>
        <position position="277"/>
    </location>
    <ligand>
        <name>substrate</name>
    </ligand>
</feature>
<accession>B5FFS9</accession>
<organism>
    <name type="scientific">Aliivibrio fischeri (strain MJ11)</name>
    <name type="common">Vibrio fischeri</name>
    <dbReference type="NCBI Taxonomy" id="388396"/>
    <lineage>
        <taxon>Bacteria</taxon>
        <taxon>Pseudomonadati</taxon>
        <taxon>Pseudomonadota</taxon>
        <taxon>Gammaproteobacteria</taxon>
        <taxon>Vibrionales</taxon>
        <taxon>Vibrionaceae</taxon>
        <taxon>Aliivibrio</taxon>
    </lineage>
</organism>
<name>HLDD_ALIFM</name>
<gene>
    <name evidence="1" type="primary">hldD</name>
    <name type="ordered locus">VFMJ11_0145</name>
</gene>
<evidence type="ECO:0000255" key="1">
    <source>
        <dbReference type="HAMAP-Rule" id="MF_01601"/>
    </source>
</evidence>
<sequence>MIIVTGGAGMIGSNIVKSLNDKGFNDILVVDNLKDGKKFKNLVDLDITDYMDKEDFITQIMAGDDFGPIEAIFHEGACSATTEWDGKYIMMNNYEYSKELLHFCIEREIPFLYASSAATYGETDTFIEEREYEGALNVYGYSKQQFDNYVRRLWADAEEHNETLSQITGFRYFNVYGPREQHKGSMASVAFHLNNQMNAGDNPKLFEGSDEFKRDFVYVGDVAAVNLWFLENGVSGIYNCGTGRAEPFRAVAEAVIKHHGKGEVETIPFPEHLKGAYQEFTQADLTKLRAAGCDVEFKSVADGVAEYMAMINK</sequence>
<proteinExistence type="inferred from homology"/>
<comment type="function">
    <text evidence="1">Catalyzes the interconversion between ADP-D-glycero-beta-D-manno-heptose and ADP-L-glycero-beta-D-manno-heptose via an epimerization at carbon 6 of the heptose.</text>
</comment>
<comment type="catalytic activity">
    <reaction evidence="1">
        <text>ADP-D-glycero-beta-D-manno-heptose = ADP-L-glycero-beta-D-manno-heptose</text>
        <dbReference type="Rhea" id="RHEA:17577"/>
        <dbReference type="ChEBI" id="CHEBI:59967"/>
        <dbReference type="ChEBI" id="CHEBI:61506"/>
        <dbReference type="EC" id="5.1.3.20"/>
    </reaction>
</comment>
<comment type="cofactor">
    <cofactor evidence="1">
        <name>NADP(+)</name>
        <dbReference type="ChEBI" id="CHEBI:58349"/>
    </cofactor>
    <text evidence="1">Binds 1 NADP(+) per subunit.</text>
</comment>
<comment type="pathway">
    <text evidence="1">Nucleotide-sugar biosynthesis; ADP-L-glycero-beta-D-manno-heptose biosynthesis; ADP-L-glycero-beta-D-manno-heptose from D-glycero-beta-D-manno-heptose 7-phosphate: step 4/4.</text>
</comment>
<comment type="subunit">
    <text evidence="1">Homopentamer.</text>
</comment>
<comment type="domain">
    <text evidence="1">Contains a large N-terminal NADP-binding domain, and a smaller C-terminal substrate-binding domain.</text>
</comment>
<comment type="similarity">
    <text evidence="1">Belongs to the NAD(P)-dependent epimerase/dehydratase family. HldD subfamily.</text>
</comment>
<dbReference type="EC" id="5.1.3.20" evidence="1"/>
<dbReference type="EMBL" id="CP001139">
    <property type="protein sequence ID" value="ACH64831.1"/>
    <property type="molecule type" value="Genomic_DNA"/>
</dbReference>
<dbReference type="RefSeq" id="WP_005417078.1">
    <property type="nucleotide sequence ID" value="NC_011184.1"/>
</dbReference>
<dbReference type="SMR" id="B5FFS9"/>
<dbReference type="KEGG" id="vfm:VFMJ11_0145"/>
<dbReference type="HOGENOM" id="CLU_007383_1_3_6"/>
<dbReference type="UniPathway" id="UPA00356">
    <property type="reaction ID" value="UER00440"/>
</dbReference>
<dbReference type="Proteomes" id="UP000001857">
    <property type="component" value="Chromosome I"/>
</dbReference>
<dbReference type="GO" id="GO:0008712">
    <property type="term" value="F:ADP-glyceromanno-heptose 6-epimerase activity"/>
    <property type="evidence" value="ECO:0007669"/>
    <property type="project" value="UniProtKB-UniRule"/>
</dbReference>
<dbReference type="GO" id="GO:0050661">
    <property type="term" value="F:NADP binding"/>
    <property type="evidence" value="ECO:0007669"/>
    <property type="project" value="InterPro"/>
</dbReference>
<dbReference type="GO" id="GO:0097171">
    <property type="term" value="P:ADP-L-glycero-beta-D-manno-heptose biosynthetic process"/>
    <property type="evidence" value="ECO:0007669"/>
    <property type="project" value="UniProtKB-UniPathway"/>
</dbReference>
<dbReference type="GO" id="GO:0005975">
    <property type="term" value="P:carbohydrate metabolic process"/>
    <property type="evidence" value="ECO:0007669"/>
    <property type="project" value="UniProtKB-UniRule"/>
</dbReference>
<dbReference type="CDD" id="cd05248">
    <property type="entry name" value="ADP_GME_SDR_e"/>
    <property type="match status" value="1"/>
</dbReference>
<dbReference type="Gene3D" id="3.40.50.720">
    <property type="entry name" value="NAD(P)-binding Rossmann-like Domain"/>
    <property type="match status" value="1"/>
</dbReference>
<dbReference type="Gene3D" id="3.90.25.10">
    <property type="entry name" value="UDP-galactose 4-epimerase, domain 1"/>
    <property type="match status" value="1"/>
</dbReference>
<dbReference type="HAMAP" id="MF_01601">
    <property type="entry name" value="Heptose_epimerase"/>
    <property type="match status" value="1"/>
</dbReference>
<dbReference type="InterPro" id="IPR001509">
    <property type="entry name" value="Epimerase_deHydtase"/>
</dbReference>
<dbReference type="InterPro" id="IPR011912">
    <property type="entry name" value="Heptose_epim"/>
</dbReference>
<dbReference type="InterPro" id="IPR036291">
    <property type="entry name" value="NAD(P)-bd_dom_sf"/>
</dbReference>
<dbReference type="NCBIfam" id="TIGR02197">
    <property type="entry name" value="heptose_epim"/>
    <property type="match status" value="1"/>
</dbReference>
<dbReference type="NCBIfam" id="NF008360">
    <property type="entry name" value="PRK11150.1"/>
    <property type="match status" value="1"/>
</dbReference>
<dbReference type="PANTHER" id="PTHR43103:SF3">
    <property type="entry name" value="ADP-L-GLYCERO-D-MANNO-HEPTOSE-6-EPIMERASE"/>
    <property type="match status" value="1"/>
</dbReference>
<dbReference type="PANTHER" id="PTHR43103">
    <property type="entry name" value="NUCLEOSIDE-DIPHOSPHATE-SUGAR EPIMERASE"/>
    <property type="match status" value="1"/>
</dbReference>
<dbReference type="Pfam" id="PF01370">
    <property type="entry name" value="Epimerase"/>
    <property type="match status" value="1"/>
</dbReference>
<dbReference type="SUPFAM" id="SSF51735">
    <property type="entry name" value="NAD(P)-binding Rossmann-fold domains"/>
    <property type="match status" value="1"/>
</dbReference>